<accession>B0RH73</accession>
<organism>
    <name type="scientific">Clavibacter sepedonicus</name>
    <name type="common">Clavibacter michiganensis subsp. sepedonicus</name>
    <dbReference type="NCBI Taxonomy" id="31964"/>
    <lineage>
        <taxon>Bacteria</taxon>
        <taxon>Bacillati</taxon>
        <taxon>Actinomycetota</taxon>
        <taxon>Actinomycetes</taxon>
        <taxon>Micrococcales</taxon>
        <taxon>Microbacteriaceae</taxon>
        <taxon>Clavibacter</taxon>
    </lineage>
</organism>
<proteinExistence type="inferred from homology"/>
<comment type="function">
    <text evidence="1">The RecF protein is involved in DNA metabolism; it is required for DNA replication and normal SOS inducibility. RecF binds preferentially to single-stranded, linear DNA. It also seems to bind ATP.</text>
</comment>
<comment type="subcellular location">
    <subcellularLocation>
        <location evidence="1">Cytoplasm</location>
    </subcellularLocation>
</comment>
<comment type="similarity">
    <text evidence="1">Belongs to the RecF family.</text>
</comment>
<protein>
    <recommendedName>
        <fullName evidence="1">DNA replication and repair protein RecF</fullName>
    </recommendedName>
</protein>
<dbReference type="EMBL" id="AM849034">
    <property type="protein sequence ID" value="CAQ00131.1"/>
    <property type="molecule type" value="Genomic_DNA"/>
</dbReference>
<dbReference type="RefSeq" id="WP_012297500.1">
    <property type="nucleotide sequence ID" value="NZ_MZMN01000003.1"/>
</dbReference>
<dbReference type="SMR" id="B0RH73"/>
<dbReference type="STRING" id="31964.CMS0005"/>
<dbReference type="KEGG" id="cms:CMS0005"/>
<dbReference type="eggNOG" id="COG1195">
    <property type="taxonomic scope" value="Bacteria"/>
</dbReference>
<dbReference type="HOGENOM" id="CLU_040267_1_1_11"/>
<dbReference type="OrthoDB" id="9803889at2"/>
<dbReference type="Proteomes" id="UP000001318">
    <property type="component" value="Chromosome"/>
</dbReference>
<dbReference type="GO" id="GO:0005737">
    <property type="term" value="C:cytoplasm"/>
    <property type="evidence" value="ECO:0007669"/>
    <property type="project" value="UniProtKB-SubCell"/>
</dbReference>
<dbReference type="GO" id="GO:0005524">
    <property type="term" value="F:ATP binding"/>
    <property type="evidence" value="ECO:0007669"/>
    <property type="project" value="UniProtKB-UniRule"/>
</dbReference>
<dbReference type="GO" id="GO:0003697">
    <property type="term" value="F:single-stranded DNA binding"/>
    <property type="evidence" value="ECO:0007669"/>
    <property type="project" value="UniProtKB-UniRule"/>
</dbReference>
<dbReference type="GO" id="GO:0006260">
    <property type="term" value="P:DNA replication"/>
    <property type="evidence" value="ECO:0007669"/>
    <property type="project" value="UniProtKB-UniRule"/>
</dbReference>
<dbReference type="GO" id="GO:0000731">
    <property type="term" value="P:DNA synthesis involved in DNA repair"/>
    <property type="evidence" value="ECO:0007669"/>
    <property type="project" value="TreeGrafter"/>
</dbReference>
<dbReference type="GO" id="GO:0006302">
    <property type="term" value="P:double-strand break repair"/>
    <property type="evidence" value="ECO:0007669"/>
    <property type="project" value="TreeGrafter"/>
</dbReference>
<dbReference type="GO" id="GO:0009432">
    <property type="term" value="P:SOS response"/>
    <property type="evidence" value="ECO:0007669"/>
    <property type="project" value="UniProtKB-UniRule"/>
</dbReference>
<dbReference type="Gene3D" id="3.40.50.300">
    <property type="entry name" value="P-loop containing nucleotide triphosphate hydrolases"/>
    <property type="match status" value="1"/>
</dbReference>
<dbReference type="Gene3D" id="1.20.1050.90">
    <property type="entry name" value="RecF/RecN/SMC, N-terminal domain"/>
    <property type="match status" value="1"/>
</dbReference>
<dbReference type="HAMAP" id="MF_00365">
    <property type="entry name" value="RecF"/>
    <property type="match status" value="1"/>
</dbReference>
<dbReference type="InterPro" id="IPR001238">
    <property type="entry name" value="DNA-binding_RecF"/>
</dbReference>
<dbReference type="InterPro" id="IPR018078">
    <property type="entry name" value="DNA-binding_RecF_CS"/>
</dbReference>
<dbReference type="InterPro" id="IPR027417">
    <property type="entry name" value="P-loop_NTPase"/>
</dbReference>
<dbReference type="InterPro" id="IPR003395">
    <property type="entry name" value="RecF/RecN/SMC_N"/>
</dbReference>
<dbReference type="InterPro" id="IPR042174">
    <property type="entry name" value="RecF_2"/>
</dbReference>
<dbReference type="NCBIfam" id="TIGR00611">
    <property type="entry name" value="recf"/>
    <property type="match status" value="1"/>
</dbReference>
<dbReference type="PANTHER" id="PTHR32182">
    <property type="entry name" value="DNA REPLICATION AND REPAIR PROTEIN RECF"/>
    <property type="match status" value="1"/>
</dbReference>
<dbReference type="PANTHER" id="PTHR32182:SF0">
    <property type="entry name" value="DNA REPLICATION AND REPAIR PROTEIN RECF"/>
    <property type="match status" value="1"/>
</dbReference>
<dbReference type="Pfam" id="PF02463">
    <property type="entry name" value="SMC_N"/>
    <property type="match status" value="1"/>
</dbReference>
<dbReference type="SUPFAM" id="SSF52540">
    <property type="entry name" value="P-loop containing nucleoside triphosphate hydrolases"/>
    <property type="match status" value="1"/>
</dbReference>
<dbReference type="PROSITE" id="PS00618">
    <property type="entry name" value="RECF_2"/>
    <property type="match status" value="1"/>
</dbReference>
<gene>
    <name evidence="1" type="primary">recF</name>
    <name type="ordered locus">CMS0005</name>
</gene>
<name>RECF_CLASE</name>
<reference key="1">
    <citation type="journal article" date="2008" name="J. Bacteriol.">
        <title>Genome of the actinomycete plant pathogen Clavibacter michiganensis subsp. sepedonicus suggests recent niche adaptation.</title>
        <authorList>
            <person name="Bentley S.D."/>
            <person name="Corton C."/>
            <person name="Brown S.E."/>
            <person name="Barron A."/>
            <person name="Clark L."/>
            <person name="Doggett J."/>
            <person name="Harris B."/>
            <person name="Ormond D."/>
            <person name="Quail M.A."/>
            <person name="May G."/>
            <person name="Francis D."/>
            <person name="Knudson D."/>
            <person name="Parkhill J."/>
            <person name="Ishimaru C.A."/>
        </authorList>
    </citation>
    <scope>NUCLEOTIDE SEQUENCE [LARGE SCALE GENOMIC DNA]</scope>
    <source>
        <strain>ATCC 33113 / DSM 20744 / JCM 9667 / LMG 2889 / ICMP 2535 / C-1</strain>
    </source>
</reference>
<keyword id="KW-0067">ATP-binding</keyword>
<keyword id="KW-0963">Cytoplasm</keyword>
<keyword id="KW-0227">DNA damage</keyword>
<keyword id="KW-0234">DNA repair</keyword>
<keyword id="KW-0235">DNA replication</keyword>
<keyword id="KW-0238">DNA-binding</keyword>
<keyword id="KW-0547">Nucleotide-binding</keyword>
<keyword id="KW-0742">SOS response</keyword>
<evidence type="ECO:0000255" key="1">
    <source>
        <dbReference type="HAMAP-Rule" id="MF_00365"/>
    </source>
</evidence>
<evidence type="ECO:0000256" key="2">
    <source>
        <dbReference type="SAM" id="MobiDB-lite"/>
    </source>
</evidence>
<sequence>MIVRHLSLGDFRNYTRADVALLPGATLFVGSNGQGKTNLVEALGFLSTLGSHRVSTDQALVRQGAESAVIRALLQHAGRELRVEVQINRSAANRAQVNGTATKTRELPRYFSSVLFAPEDLALVRGDPSGRRRLLDQLLVLRTPRLAGVLSDYDRALKQRNTLLKSARARGMKADQLSTLDIWDERLVAIGSQIIAARGALVESLQPELARAYLAVAGSDHGPSARPELSILADDPGEDDVADETGARDGGRFTRTEDVVPVFTAAIARMRPRELERGLTLVGPHRDDVLFRLNGLPAKGYASHGESWSFALAIKLASAELLRRDSQTGDPVLILDDVFAELDQARRGRLAEAVTGFEQVLITAAVFEDVPEHLAANAVHIRAGAIVESPTPASASEPASPGEDGGAA</sequence>
<feature type="chain" id="PRO_1000079582" description="DNA replication and repair protein RecF">
    <location>
        <begin position="1"/>
        <end position="408"/>
    </location>
</feature>
<feature type="region of interest" description="Disordered" evidence="2">
    <location>
        <begin position="220"/>
        <end position="252"/>
    </location>
</feature>
<feature type="region of interest" description="Disordered" evidence="2">
    <location>
        <begin position="389"/>
        <end position="408"/>
    </location>
</feature>
<feature type="compositionally biased region" description="Low complexity" evidence="2">
    <location>
        <begin position="389"/>
        <end position="402"/>
    </location>
</feature>
<feature type="binding site" evidence="1">
    <location>
        <begin position="30"/>
        <end position="37"/>
    </location>
    <ligand>
        <name>ATP</name>
        <dbReference type="ChEBI" id="CHEBI:30616"/>
    </ligand>
</feature>